<name>NU6M_UROTA</name>
<evidence type="ECO:0000250" key="1">
    <source>
        <dbReference type="UniProtKB" id="P03923"/>
    </source>
</evidence>
<evidence type="ECO:0000250" key="2">
    <source>
        <dbReference type="UniProtKB" id="P03924"/>
    </source>
</evidence>
<evidence type="ECO:0000255" key="3"/>
<evidence type="ECO:0000305" key="4"/>
<comment type="function">
    <text evidence="1">Core subunit of the mitochondrial membrane respiratory chain NADH dehydrogenase (Complex I) which catalyzes electron transfer from NADH through the respiratory chain, using ubiquinone as an electron acceptor. Essential for the catalytic activity and assembly of complex I.</text>
</comment>
<comment type="catalytic activity">
    <reaction evidence="1">
        <text>a ubiquinone + NADH + 5 H(+)(in) = a ubiquinol + NAD(+) + 4 H(+)(out)</text>
        <dbReference type="Rhea" id="RHEA:29091"/>
        <dbReference type="Rhea" id="RHEA-COMP:9565"/>
        <dbReference type="Rhea" id="RHEA-COMP:9566"/>
        <dbReference type="ChEBI" id="CHEBI:15378"/>
        <dbReference type="ChEBI" id="CHEBI:16389"/>
        <dbReference type="ChEBI" id="CHEBI:17976"/>
        <dbReference type="ChEBI" id="CHEBI:57540"/>
        <dbReference type="ChEBI" id="CHEBI:57945"/>
        <dbReference type="EC" id="7.1.1.2"/>
    </reaction>
</comment>
<comment type="subunit">
    <text evidence="2">Core subunit of respiratory chain NADH dehydrogenase (Complex I) which is composed of 45 different subunits.</text>
</comment>
<comment type="subcellular location">
    <subcellularLocation>
        <location evidence="2">Mitochondrion inner membrane</location>
        <topology evidence="3">Multi-pass membrane protein</topology>
    </subcellularLocation>
</comment>
<comment type="similarity">
    <text evidence="4">Belongs to the complex I subunit 6 family.</text>
</comment>
<accession>Q7Y8D2</accession>
<protein>
    <recommendedName>
        <fullName>NADH-ubiquinone oxidoreductase chain 6</fullName>
        <ecNumber evidence="1">7.1.1.2</ecNumber>
    </recommendedName>
    <alternativeName>
        <fullName>NADH dehydrogenase subunit 6</fullName>
    </alternativeName>
</protein>
<sequence>MMTYIAFILSTILVVSFVGFSSKPSPIYGGLGLIVSGGVGCGIVLNYGGSFLGLMVFLIYLGGMLVVFGYTTAMAMEEYPEVWVSNKTVLSLFVLGFMAELLFAGYCISDEKLEIVLNFNGQGDWVIYDTGDSGFFSEEAMGIAALYSYGTWLVIVTGWSLVIGVLVVMEITRGN</sequence>
<reference key="1">
    <citation type="journal article" date="2003" name="Mol. Phylogenet. Evol.">
        <title>Mitochondrial phylogeny of hedgehogs and monophyly of Eulipotyphla.</title>
        <authorList>
            <person name="Nikaido M."/>
            <person name="Cao Y."/>
            <person name="Harada M."/>
            <person name="Okada N."/>
            <person name="Hasegawa M."/>
        </authorList>
    </citation>
    <scope>NUCLEOTIDE SEQUENCE [GENOMIC DNA]</scope>
</reference>
<organism>
    <name type="scientific">Urotrichus talpoides</name>
    <name type="common">Japanese shrew mole</name>
    <dbReference type="NCBI Taxonomy" id="106106"/>
    <lineage>
        <taxon>Eukaryota</taxon>
        <taxon>Metazoa</taxon>
        <taxon>Chordata</taxon>
        <taxon>Craniata</taxon>
        <taxon>Vertebrata</taxon>
        <taxon>Euteleostomi</taxon>
        <taxon>Mammalia</taxon>
        <taxon>Eutheria</taxon>
        <taxon>Laurasiatheria</taxon>
        <taxon>Eulipotyphla</taxon>
        <taxon>Talpidae</taxon>
        <taxon>Urotrichus</taxon>
    </lineage>
</organism>
<geneLocation type="mitochondrion"/>
<gene>
    <name type="primary">MT-ND6</name>
    <name type="synonym">MTND6</name>
    <name type="synonym">NADH6</name>
    <name type="synonym">ND6</name>
</gene>
<dbReference type="EC" id="7.1.1.2" evidence="1"/>
<dbReference type="EMBL" id="AB099483">
    <property type="protein sequence ID" value="BAC78885.1"/>
    <property type="molecule type" value="Genomic_DNA"/>
</dbReference>
<dbReference type="RefSeq" id="NP_871772.1">
    <property type="nucleotide sequence ID" value="NC_005034.1"/>
</dbReference>
<dbReference type="SMR" id="Q7Y8D2"/>
<dbReference type="GeneID" id="1457796"/>
<dbReference type="CTD" id="4541"/>
<dbReference type="GO" id="GO:0005743">
    <property type="term" value="C:mitochondrial inner membrane"/>
    <property type="evidence" value="ECO:0000250"/>
    <property type="project" value="UniProtKB"/>
</dbReference>
<dbReference type="GO" id="GO:0008137">
    <property type="term" value="F:NADH dehydrogenase (ubiquinone) activity"/>
    <property type="evidence" value="ECO:0000250"/>
    <property type="project" value="UniProtKB"/>
</dbReference>
<dbReference type="GO" id="GO:0006120">
    <property type="term" value="P:mitochondrial electron transport, NADH to ubiquinone"/>
    <property type="evidence" value="ECO:0000250"/>
    <property type="project" value="UniProtKB"/>
</dbReference>
<dbReference type="GO" id="GO:0032981">
    <property type="term" value="P:mitochondrial respiratory chain complex I assembly"/>
    <property type="evidence" value="ECO:0000250"/>
    <property type="project" value="UniProtKB"/>
</dbReference>
<dbReference type="Gene3D" id="1.20.120.1200">
    <property type="entry name" value="NADH-ubiquinone/plastoquinone oxidoreductase chain 6, subunit NuoJ"/>
    <property type="match status" value="1"/>
</dbReference>
<dbReference type="InterPro" id="IPR050269">
    <property type="entry name" value="ComplexI_Subunit6"/>
</dbReference>
<dbReference type="InterPro" id="IPR001457">
    <property type="entry name" value="NADH_UbQ/plastoQ_OxRdtase_su6"/>
</dbReference>
<dbReference type="InterPro" id="IPR042106">
    <property type="entry name" value="Nuo/plastoQ_OxRdtase_6_NuoJ"/>
</dbReference>
<dbReference type="PANTHER" id="PTHR11435">
    <property type="entry name" value="NADH UBIQUINONE OXIDOREDUCTASE SUBUNIT ND6"/>
    <property type="match status" value="1"/>
</dbReference>
<dbReference type="PANTHER" id="PTHR11435:SF1">
    <property type="entry name" value="NADH-UBIQUINONE OXIDOREDUCTASE CHAIN 6"/>
    <property type="match status" value="1"/>
</dbReference>
<dbReference type="Pfam" id="PF00499">
    <property type="entry name" value="Oxidored_q3"/>
    <property type="match status" value="1"/>
</dbReference>
<proteinExistence type="inferred from homology"/>
<keyword id="KW-0249">Electron transport</keyword>
<keyword id="KW-0472">Membrane</keyword>
<keyword id="KW-0496">Mitochondrion</keyword>
<keyword id="KW-0999">Mitochondrion inner membrane</keyword>
<keyword id="KW-0520">NAD</keyword>
<keyword id="KW-0679">Respiratory chain</keyword>
<keyword id="KW-1278">Translocase</keyword>
<keyword id="KW-0812">Transmembrane</keyword>
<keyword id="KW-1133">Transmembrane helix</keyword>
<keyword id="KW-0813">Transport</keyword>
<feature type="chain" id="PRO_0000118346" description="NADH-ubiquinone oxidoreductase chain 6">
    <location>
        <begin position="1"/>
        <end position="175"/>
    </location>
</feature>
<feature type="transmembrane region" description="Helical" evidence="3">
    <location>
        <begin position="1"/>
        <end position="21"/>
    </location>
</feature>
<feature type="transmembrane region" description="Helical" evidence="3">
    <location>
        <begin position="25"/>
        <end position="45"/>
    </location>
</feature>
<feature type="transmembrane region" description="Helical" evidence="3">
    <location>
        <begin position="48"/>
        <end position="68"/>
    </location>
</feature>
<feature type="transmembrane region" description="Helical" evidence="3">
    <location>
        <begin position="88"/>
        <end position="108"/>
    </location>
</feature>
<feature type="transmembrane region" description="Helical" evidence="3">
    <location>
        <begin position="149"/>
        <end position="169"/>
    </location>
</feature>